<evidence type="ECO:0000250" key="1"/>
<evidence type="ECO:0000255" key="2"/>
<evidence type="ECO:0000305" key="3"/>
<gene>
    <name type="primary">TMEM14C</name>
</gene>
<comment type="function">
    <text evidence="1">Required for normal heme biosynthesis.</text>
</comment>
<comment type="subcellular location">
    <subcellularLocation>
        <location evidence="1">Mitochondrion membrane</location>
        <topology evidence="1">Multi-pass membrane protein</topology>
    </subcellularLocation>
</comment>
<comment type="similarity">
    <text evidence="3">Belongs to the TMEM14 family.</text>
</comment>
<sequence>MQDTGSVVPLHWFGFGYAALVASGGIIGYAKAGSVPSLAAGLLFGSLASLGAYQLSQDPRNVWVFLATSGTLAGIMGMRFYHSGKFMPAGLIAGASLLMVAKVGVSMFNRPH</sequence>
<reference key="1">
    <citation type="submission" date="2004-11" db="EMBL/GenBank/DDBJ databases">
        <authorList>
            <consortium name="The German cDNA consortium"/>
        </authorList>
    </citation>
    <scope>NUCLEOTIDE SEQUENCE [LARGE SCALE MRNA]</scope>
    <source>
        <tissue>Brain cortex</tissue>
    </source>
</reference>
<protein>
    <recommendedName>
        <fullName>Transmembrane protein 14C</fullName>
    </recommendedName>
</protein>
<accession>Q5R751</accession>
<feature type="chain" id="PRO_0000328448" description="Transmembrane protein 14C">
    <location>
        <begin position="1"/>
        <end position="112"/>
    </location>
</feature>
<feature type="transmembrane region" description="Helical" evidence="2">
    <location>
        <begin position="7"/>
        <end position="27"/>
    </location>
</feature>
<feature type="transmembrane region" description="Helical" evidence="2">
    <location>
        <begin position="32"/>
        <end position="52"/>
    </location>
</feature>
<feature type="transmembrane region" description="Helical" evidence="2">
    <location>
        <begin position="62"/>
        <end position="82"/>
    </location>
</feature>
<feature type="transmembrane region" description="Helical" evidence="2">
    <location>
        <begin position="86"/>
        <end position="106"/>
    </location>
</feature>
<dbReference type="EMBL" id="CR860267">
    <property type="protein sequence ID" value="CAH92409.1"/>
    <property type="molecule type" value="mRNA"/>
</dbReference>
<dbReference type="RefSeq" id="NP_001129017.1">
    <property type="nucleotide sequence ID" value="NM_001135545.2"/>
</dbReference>
<dbReference type="RefSeq" id="XP_063580818.1">
    <property type="nucleotide sequence ID" value="XM_063724748.1"/>
</dbReference>
<dbReference type="BMRB" id="Q5R751"/>
<dbReference type="FunCoup" id="Q5R751">
    <property type="interactions" value="556"/>
</dbReference>
<dbReference type="STRING" id="9601.ENSPPYP00000018147"/>
<dbReference type="Ensembl" id="ENSPPYT00000051444.1">
    <property type="protein sequence ID" value="ENSPPYP00000039464.1"/>
    <property type="gene ID" value="ENSPPYG00000030032.1"/>
</dbReference>
<dbReference type="GeneID" id="100190858"/>
<dbReference type="KEGG" id="pon:100190858"/>
<dbReference type="CTD" id="51522"/>
<dbReference type="GeneTree" id="ENSGT00940000154772"/>
<dbReference type="InParanoid" id="Q5R751"/>
<dbReference type="OMA" id="CSYNEYK"/>
<dbReference type="OrthoDB" id="5620at2759"/>
<dbReference type="Proteomes" id="UP000001595">
    <property type="component" value="Chromosome 6"/>
</dbReference>
<dbReference type="GO" id="GO:0005743">
    <property type="term" value="C:mitochondrial inner membrane"/>
    <property type="evidence" value="ECO:0007669"/>
    <property type="project" value="Ensembl"/>
</dbReference>
<dbReference type="GO" id="GO:0030218">
    <property type="term" value="P:erythrocyte differentiation"/>
    <property type="evidence" value="ECO:0007669"/>
    <property type="project" value="Ensembl"/>
</dbReference>
<dbReference type="GO" id="GO:0006783">
    <property type="term" value="P:heme biosynthetic process"/>
    <property type="evidence" value="ECO:0007669"/>
    <property type="project" value="UniProtKB-KW"/>
</dbReference>
<dbReference type="GO" id="GO:0006839">
    <property type="term" value="P:mitochondrial transport"/>
    <property type="evidence" value="ECO:0007669"/>
    <property type="project" value="Ensembl"/>
</dbReference>
<dbReference type="GO" id="GO:0070453">
    <property type="term" value="P:regulation of heme biosynthetic process"/>
    <property type="evidence" value="ECO:0007669"/>
    <property type="project" value="Ensembl"/>
</dbReference>
<dbReference type="FunFam" id="1.10.10.1740:FF:000002">
    <property type="entry name" value="Transmembrane protein 14C"/>
    <property type="match status" value="1"/>
</dbReference>
<dbReference type="Gene3D" id="1.10.10.1740">
    <property type="entry name" value="Transmembrane protein 14-like"/>
    <property type="match status" value="1"/>
</dbReference>
<dbReference type="InterPro" id="IPR005349">
    <property type="entry name" value="TMEM14"/>
</dbReference>
<dbReference type="InterPro" id="IPR044890">
    <property type="entry name" value="TMEM14_sf"/>
</dbReference>
<dbReference type="PANTHER" id="PTHR12668">
    <property type="entry name" value="TRANSMEMBRANE PROTEIN 14, 15"/>
    <property type="match status" value="1"/>
</dbReference>
<dbReference type="PANTHER" id="PTHR12668:SF4">
    <property type="entry name" value="TRANSMEMBRANE PROTEIN 14C-RELATED"/>
    <property type="match status" value="1"/>
</dbReference>
<dbReference type="Pfam" id="PF03647">
    <property type="entry name" value="Tmemb_14"/>
    <property type="match status" value="1"/>
</dbReference>
<proteinExistence type="inferred from homology"/>
<name>TM14C_PONAB</name>
<keyword id="KW-0350">Heme biosynthesis</keyword>
<keyword id="KW-0472">Membrane</keyword>
<keyword id="KW-0496">Mitochondrion</keyword>
<keyword id="KW-1185">Reference proteome</keyword>
<keyword id="KW-0812">Transmembrane</keyword>
<keyword id="KW-1133">Transmembrane helix</keyword>
<organism>
    <name type="scientific">Pongo abelii</name>
    <name type="common">Sumatran orangutan</name>
    <name type="synonym">Pongo pygmaeus abelii</name>
    <dbReference type="NCBI Taxonomy" id="9601"/>
    <lineage>
        <taxon>Eukaryota</taxon>
        <taxon>Metazoa</taxon>
        <taxon>Chordata</taxon>
        <taxon>Craniata</taxon>
        <taxon>Vertebrata</taxon>
        <taxon>Euteleostomi</taxon>
        <taxon>Mammalia</taxon>
        <taxon>Eutheria</taxon>
        <taxon>Euarchontoglires</taxon>
        <taxon>Primates</taxon>
        <taxon>Haplorrhini</taxon>
        <taxon>Catarrhini</taxon>
        <taxon>Hominidae</taxon>
        <taxon>Pongo</taxon>
    </lineage>
</organism>